<gene>
    <name type="primary">Gmps</name>
</gene>
<name>GUAA_MOUSE</name>
<feature type="initiator methionine" description="Removed" evidence="1">
    <location>
        <position position="1"/>
    </location>
</feature>
<feature type="chain" id="PRO_0000284365" description="GMP synthase [glutamine-hydrolyzing]">
    <location>
        <begin position="2"/>
        <end position="693"/>
    </location>
</feature>
<feature type="domain" description="Glutamine amidotransferase type-1" evidence="3">
    <location>
        <begin position="27"/>
        <end position="216"/>
    </location>
</feature>
<feature type="domain" description="GMPS ATP-PPase" evidence="4">
    <location>
        <begin position="217"/>
        <end position="435"/>
    </location>
</feature>
<feature type="active site" description="For GATase activity" evidence="3">
    <location>
        <position position="104"/>
    </location>
</feature>
<feature type="active site" description="For GATase activity" evidence="3">
    <location>
        <position position="190"/>
    </location>
</feature>
<feature type="active site" description="For GATase activity" evidence="3">
    <location>
        <position position="192"/>
    </location>
</feature>
<feature type="binding site" evidence="4">
    <location>
        <begin position="244"/>
        <end position="250"/>
    </location>
    <ligand>
        <name>ATP</name>
        <dbReference type="ChEBI" id="CHEBI:30616"/>
    </ligand>
</feature>
<feature type="binding site" evidence="1">
    <location>
        <position position="337"/>
    </location>
    <ligand>
        <name>XMP</name>
        <dbReference type="ChEBI" id="CHEBI:57464"/>
    </ligand>
</feature>
<feature type="binding site" evidence="1">
    <location>
        <position position="522"/>
    </location>
    <ligand>
        <name>XMP</name>
        <dbReference type="ChEBI" id="CHEBI:57464"/>
    </ligand>
</feature>
<feature type="binding site" evidence="1">
    <location>
        <position position="610"/>
    </location>
    <ligand>
        <name>XMP</name>
        <dbReference type="ChEBI" id="CHEBI:57464"/>
    </ligand>
</feature>
<feature type="binding site" evidence="1">
    <location>
        <position position="685"/>
    </location>
    <ligand>
        <name>XMP</name>
        <dbReference type="ChEBI" id="CHEBI:57464"/>
    </ligand>
</feature>
<feature type="binding site" evidence="1">
    <location>
        <position position="691"/>
    </location>
    <ligand>
        <name>XMP</name>
        <dbReference type="ChEBI" id="CHEBI:57464"/>
    </ligand>
</feature>
<feature type="modified residue" description="N-acetylalanine" evidence="1">
    <location>
        <position position="2"/>
    </location>
</feature>
<feature type="modified residue" description="Phosphoserine" evidence="1">
    <location>
        <position position="8"/>
    </location>
</feature>
<feature type="modified residue" description="N6-acetyllysine" evidence="1">
    <location>
        <position position="9"/>
    </location>
</feature>
<feature type="modified residue" description="Phosphothreonine" evidence="1">
    <location>
        <position position="318"/>
    </location>
</feature>
<feature type="modified residue" description="Phosphoserine" evidence="1">
    <location>
        <position position="332"/>
    </location>
</feature>
<feature type="sequence conflict" description="In Ref. 1; BAE39875." evidence="6" ref="1">
    <original>V</original>
    <variation>I</variation>
    <location>
        <position position="201"/>
    </location>
</feature>
<feature type="sequence conflict" description="In Ref. 1; BAE39875." evidence="6" ref="1">
    <original>N</original>
    <variation>Y</variation>
    <location>
        <position position="205"/>
    </location>
</feature>
<feature type="sequence conflict" description="In Ref. 1; BAE39875." evidence="6" ref="1">
    <original>V</original>
    <variation>D</variation>
    <location>
        <position position="265"/>
    </location>
</feature>
<feature type="sequence conflict" description="In Ref. 1; BAE40189." evidence="6" ref="1">
    <original>S</original>
    <variation>G</variation>
    <location>
        <position position="356"/>
    </location>
</feature>
<feature type="sequence conflict" description="In Ref. 1; BAE40189." evidence="6" ref="1">
    <original>P</original>
    <variation>H</variation>
    <location>
        <position position="359"/>
    </location>
</feature>
<feature type="sequence conflict" description="In Ref. 1; BAE39875." evidence="6" ref="1">
    <original>P</original>
    <variation>R</variation>
    <location>
        <position position="359"/>
    </location>
</feature>
<feature type="sequence conflict" description="In Ref. 1; BAE39875." evidence="6" ref="1">
    <location>
        <position position="363"/>
    </location>
</feature>
<feature type="sequence conflict" description="In Ref. 1; BAE27334." evidence="6" ref="1">
    <original>LL</original>
    <variation>CC</variation>
    <location>
        <begin position="511"/>
        <end position="512"/>
    </location>
</feature>
<feature type="sequence conflict" description="In Ref. 1; BAE39875." evidence="6" ref="1">
    <original>S</original>
    <variation>G</variation>
    <location>
        <position position="586"/>
    </location>
</feature>
<reference key="1">
    <citation type="journal article" date="2005" name="Science">
        <title>The transcriptional landscape of the mammalian genome.</title>
        <authorList>
            <person name="Carninci P."/>
            <person name="Kasukawa T."/>
            <person name="Katayama S."/>
            <person name="Gough J."/>
            <person name="Frith M.C."/>
            <person name="Maeda N."/>
            <person name="Oyama R."/>
            <person name="Ravasi T."/>
            <person name="Lenhard B."/>
            <person name="Wells C."/>
            <person name="Kodzius R."/>
            <person name="Shimokawa K."/>
            <person name="Bajic V.B."/>
            <person name="Brenner S.E."/>
            <person name="Batalov S."/>
            <person name="Forrest A.R."/>
            <person name="Zavolan M."/>
            <person name="Davis M.J."/>
            <person name="Wilming L.G."/>
            <person name="Aidinis V."/>
            <person name="Allen J.E."/>
            <person name="Ambesi-Impiombato A."/>
            <person name="Apweiler R."/>
            <person name="Aturaliya R.N."/>
            <person name="Bailey T.L."/>
            <person name="Bansal M."/>
            <person name="Baxter L."/>
            <person name="Beisel K.W."/>
            <person name="Bersano T."/>
            <person name="Bono H."/>
            <person name="Chalk A.M."/>
            <person name="Chiu K.P."/>
            <person name="Choudhary V."/>
            <person name="Christoffels A."/>
            <person name="Clutterbuck D.R."/>
            <person name="Crowe M.L."/>
            <person name="Dalla E."/>
            <person name="Dalrymple B.P."/>
            <person name="de Bono B."/>
            <person name="Della Gatta G."/>
            <person name="di Bernardo D."/>
            <person name="Down T."/>
            <person name="Engstrom P."/>
            <person name="Fagiolini M."/>
            <person name="Faulkner G."/>
            <person name="Fletcher C.F."/>
            <person name="Fukushima T."/>
            <person name="Furuno M."/>
            <person name="Futaki S."/>
            <person name="Gariboldi M."/>
            <person name="Georgii-Hemming P."/>
            <person name="Gingeras T.R."/>
            <person name="Gojobori T."/>
            <person name="Green R.E."/>
            <person name="Gustincich S."/>
            <person name="Harbers M."/>
            <person name="Hayashi Y."/>
            <person name="Hensch T.K."/>
            <person name="Hirokawa N."/>
            <person name="Hill D."/>
            <person name="Huminiecki L."/>
            <person name="Iacono M."/>
            <person name="Ikeo K."/>
            <person name="Iwama A."/>
            <person name="Ishikawa T."/>
            <person name="Jakt M."/>
            <person name="Kanapin A."/>
            <person name="Katoh M."/>
            <person name="Kawasawa Y."/>
            <person name="Kelso J."/>
            <person name="Kitamura H."/>
            <person name="Kitano H."/>
            <person name="Kollias G."/>
            <person name="Krishnan S.P."/>
            <person name="Kruger A."/>
            <person name="Kummerfeld S.K."/>
            <person name="Kurochkin I.V."/>
            <person name="Lareau L.F."/>
            <person name="Lazarevic D."/>
            <person name="Lipovich L."/>
            <person name="Liu J."/>
            <person name="Liuni S."/>
            <person name="McWilliam S."/>
            <person name="Madan Babu M."/>
            <person name="Madera M."/>
            <person name="Marchionni L."/>
            <person name="Matsuda H."/>
            <person name="Matsuzawa S."/>
            <person name="Miki H."/>
            <person name="Mignone F."/>
            <person name="Miyake S."/>
            <person name="Morris K."/>
            <person name="Mottagui-Tabar S."/>
            <person name="Mulder N."/>
            <person name="Nakano N."/>
            <person name="Nakauchi H."/>
            <person name="Ng P."/>
            <person name="Nilsson R."/>
            <person name="Nishiguchi S."/>
            <person name="Nishikawa S."/>
            <person name="Nori F."/>
            <person name="Ohara O."/>
            <person name="Okazaki Y."/>
            <person name="Orlando V."/>
            <person name="Pang K.C."/>
            <person name="Pavan W.J."/>
            <person name="Pavesi G."/>
            <person name="Pesole G."/>
            <person name="Petrovsky N."/>
            <person name="Piazza S."/>
            <person name="Reed J."/>
            <person name="Reid J.F."/>
            <person name="Ring B.Z."/>
            <person name="Ringwald M."/>
            <person name="Rost B."/>
            <person name="Ruan Y."/>
            <person name="Salzberg S.L."/>
            <person name="Sandelin A."/>
            <person name="Schneider C."/>
            <person name="Schoenbach C."/>
            <person name="Sekiguchi K."/>
            <person name="Semple C.A."/>
            <person name="Seno S."/>
            <person name="Sessa L."/>
            <person name="Sheng Y."/>
            <person name="Shibata Y."/>
            <person name="Shimada H."/>
            <person name="Shimada K."/>
            <person name="Silva D."/>
            <person name="Sinclair B."/>
            <person name="Sperling S."/>
            <person name="Stupka E."/>
            <person name="Sugiura K."/>
            <person name="Sultana R."/>
            <person name="Takenaka Y."/>
            <person name="Taki K."/>
            <person name="Tammoja K."/>
            <person name="Tan S.L."/>
            <person name="Tang S."/>
            <person name="Taylor M.S."/>
            <person name="Tegner J."/>
            <person name="Teichmann S.A."/>
            <person name="Ueda H.R."/>
            <person name="van Nimwegen E."/>
            <person name="Verardo R."/>
            <person name="Wei C.L."/>
            <person name="Yagi K."/>
            <person name="Yamanishi H."/>
            <person name="Zabarovsky E."/>
            <person name="Zhu S."/>
            <person name="Zimmer A."/>
            <person name="Hide W."/>
            <person name="Bult C."/>
            <person name="Grimmond S.M."/>
            <person name="Teasdale R.D."/>
            <person name="Liu E.T."/>
            <person name="Brusic V."/>
            <person name="Quackenbush J."/>
            <person name="Wahlestedt C."/>
            <person name="Mattick J.S."/>
            <person name="Hume D.A."/>
            <person name="Kai C."/>
            <person name="Sasaki D."/>
            <person name="Tomaru Y."/>
            <person name="Fukuda S."/>
            <person name="Kanamori-Katayama M."/>
            <person name="Suzuki M."/>
            <person name="Aoki J."/>
            <person name="Arakawa T."/>
            <person name="Iida J."/>
            <person name="Imamura K."/>
            <person name="Itoh M."/>
            <person name="Kato T."/>
            <person name="Kawaji H."/>
            <person name="Kawagashira N."/>
            <person name="Kawashima T."/>
            <person name="Kojima M."/>
            <person name="Kondo S."/>
            <person name="Konno H."/>
            <person name="Nakano K."/>
            <person name="Ninomiya N."/>
            <person name="Nishio T."/>
            <person name="Okada M."/>
            <person name="Plessy C."/>
            <person name="Shibata K."/>
            <person name="Shiraki T."/>
            <person name="Suzuki S."/>
            <person name="Tagami M."/>
            <person name="Waki K."/>
            <person name="Watahiki A."/>
            <person name="Okamura-Oho Y."/>
            <person name="Suzuki H."/>
            <person name="Kawai J."/>
            <person name="Hayashizaki Y."/>
        </authorList>
    </citation>
    <scope>NUCLEOTIDE SEQUENCE [LARGE SCALE MRNA]</scope>
    <source>
        <strain>BALB/cJ</strain>
        <strain>C57BL/6J</strain>
        <strain>DBA/2J</strain>
        <strain>NOD</strain>
        <tissue>Eye</tissue>
        <tissue>Heart</tissue>
        <tissue>Kidney</tissue>
        <tissue>Spinal cord</tissue>
        <tissue>Thymus</tissue>
    </source>
</reference>
<reference key="2">
    <citation type="journal article" date="2004" name="Genome Res.">
        <title>The status, quality, and expansion of the NIH full-length cDNA project: the Mammalian Gene Collection (MGC).</title>
        <authorList>
            <consortium name="The MGC Project Team"/>
        </authorList>
    </citation>
    <scope>NUCLEOTIDE SEQUENCE [LARGE SCALE MRNA] OF 217-693</scope>
    <source>
        <tissue>Limb</tissue>
    </source>
</reference>
<reference key="3">
    <citation type="submission" date="2007-07" db="UniProtKB">
        <authorList>
            <person name="Lubec G."/>
            <person name="Klug S."/>
            <person name="Yang J.W."/>
            <person name="Zigmond M."/>
        </authorList>
    </citation>
    <scope>PROTEIN SEQUENCE OF 536-548 AND 570-589</scope>
    <scope>IDENTIFICATION BY MASS SPECTROMETRY</scope>
    <source>
        <tissue>Brain</tissue>
        <tissue>Hippocampus</tissue>
    </source>
</reference>
<reference key="4">
    <citation type="journal article" date="1975" name="J. Biol. Chem.">
        <title>Studies with GMP synthetase from Ehrlich ascites cells. Purification, properties, and interactions with nucleotide analogs.</title>
        <authorList>
            <person name="Spector T."/>
        </authorList>
    </citation>
    <scope>FUNCTION</scope>
    <scope>CATALYTIC ACTIVITY</scope>
    <scope>BIOPHYSICOCHEMICAL PROPERTIES</scope>
    <scope>ACTIVITY REGULATION</scope>
</reference>
<reference key="5">
    <citation type="journal article" date="2010" name="Cell">
        <title>A tissue-specific atlas of mouse protein phosphorylation and expression.</title>
        <authorList>
            <person name="Huttlin E.L."/>
            <person name="Jedrychowski M.P."/>
            <person name="Elias J.E."/>
            <person name="Goswami T."/>
            <person name="Rad R."/>
            <person name="Beausoleil S.A."/>
            <person name="Villen J."/>
            <person name="Haas W."/>
            <person name="Sowa M.E."/>
            <person name="Gygi S.P."/>
        </authorList>
    </citation>
    <scope>IDENTIFICATION BY MASS SPECTROMETRY [LARGE SCALE ANALYSIS]</scope>
    <source>
        <tissue>Brain</tissue>
        <tissue>Brown adipose tissue</tissue>
        <tissue>Heart</tissue>
        <tissue>Kidney</tissue>
        <tissue>Liver</tissue>
        <tissue>Lung</tissue>
        <tissue>Pancreas</tissue>
        <tissue>Spleen</tissue>
        <tissue>Testis</tissue>
    </source>
</reference>
<sequence length="693" mass="76723">MALCNGDSKPENAGGDLKDGSHHYEGAVVILDAGAQYGKVIDRRVRELFVQSEIFPLETPAFAIKEQGFRAIIISGGPNSVYAEDAPWFDPAIFTIGKPILGICYGMQMMNKVFGGTVHKKSVREDGVFNISMDNTCSLFRGLQKEEIVLLTHGDSVDKVADGFKVVARSGNIVAGIANESKKLYGVQFHPEVGLTENGKVILKNFLYDIAGCSGNFTVQNRELECIREIKEKVGTSKVLVLLSGGVDSTVCTALLNRALNQDQVIAVHIDNGFMRKRESQSVEEALKKLGIQVKVINAAHSFYNGTTTLPISDEDRTPRKRISKTLNMTTSPEEKRKIIGDTFVKIANEVIGEMSLKPEEVFLAQGTLRPDLIESASLVASGKAELIKTHHNDTELIRKLREEGKVIEPLKDFHKDEVRILGRELDLPEELVSRHPFPGPGLAIRVICAEEPYICKDFPETNNILKIVADFSASVKKPHTLLQRVKACTTEEDQEKLMQITSLHSLNAFLLPIKTVGVQGDCRSYSYVCGISSKDEPDWESLIFLARLIPRMCHNINRVVYIFGPPVKEPPTDVTPTFLTTGVLSTLRQADFEAHNILRESGFAGKISQMPVILTPLHFDRDPLQKQPSCQRSVVIRTFITSDFMTGVPATPGNEIPVEVVLKMVTEIKKIPGISRIMYDLTSKPPGTTEWE</sequence>
<protein>
    <recommendedName>
        <fullName>GMP synthase [glutamine-hydrolyzing]</fullName>
        <ecNumber evidence="5">6.3.5.2</ecNumber>
    </recommendedName>
    <alternativeName>
        <fullName>GMP synthetase</fullName>
    </alternativeName>
    <alternativeName>
        <fullName>Glutamine amidotransferase</fullName>
    </alternativeName>
</protein>
<dbReference type="EC" id="6.3.5.2" evidence="5"/>
<dbReference type="EMBL" id="AK049755">
    <property type="protein sequence ID" value="BAE20667.1"/>
    <property type="status" value="ALT_FRAME"/>
    <property type="molecule type" value="mRNA"/>
</dbReference>
<dbReference type="EMBL" id="AK143197">
    <property type="protein sequence ID" value="BAE25299.1"/>
    <property type="molecule type" value="mRNA"/>
</dbReference>
<dbReference type="EMBL" id="AK146654">
    <property type="protein sequence ID" value="BAE27334.1"/>
    <property type="molecule type" value="mRNA"/>
</dbReference>
<dbReference type="EMBL" id="AK167857">
    <property type="protein sequence ID" value="BAE39875.1"/>
    <property type="molecule type" value="mRNA"/>
</dbReference>
<dbReference type="EMBL" id="AK168239">
    <property type="protein sequence ID" value="BAE40189.1"/>
    <property type="molecule type" value="mRNA"/>
</dbReference>
<dbReference type="EMBL" id="AK169043">
    <property type="protein sequence ID" value="BAE40832.1"/>
    <property type="molecule type" value="mRNA"/>
</dbReference>
<dbReference type="EMBL" id="AK169701">
    <property type="protein sequence ID" value="BAE41314.1"/>
    <property type="molecule type" value="mRNA"/>
</dbReference>
<dbReference type="EMBL" id="BC080685">
    <property type="protein sequence ID" value="AAH80685.1"/>
    <property type="molecule type" value="mRNA"/>
</dbReference>
<dbReference type="CCDS" id="CCDS17383.1"/>
<dbReference type="RefSeq" id="NP_001028472.2">
    <property type="nucleotide sequence ID" value="NM_001033300.2"/>
</dbReference>
<dbReference type="SMR" id="Q3THK7"/>
<dbReference type="BioGRID" id="230837">
    <property type="interactions" value="23"/>
</dbReference>
<dbReference type="FunCoup" id="Q3THK7">
    <property type="interactions" value="3336"/>
</dbReference>
<dbReference type="STRING" id="10090.ENSMUSP00000029405"/>
<dbReference type="BindingDB" id="Q3THK7"/>
<dbReference type="ChEMBL" id="CHEMBL2765"/>
<dbReference type="MEROPS" id="C26.950"/>
<dbReference type="GlyGen" id="Q3THK7">
    <property type="glycosylation" value="3 sites, 1 N-linked glycan (1 site), 1 O-linked glycan (1 site)"/>
</dbReference>
<dbReference type="iPTMnet" id="Q3THK7"/>
<dbReference type="PhosphoSitePlus" id="Q3THK7"/>
<dbReference type="SwissPalm" id="Q3THK7"/>
<dbReference type="REPRODUCTION-2DPAGE" id="IPI00351252"/>
<dbReference type="jPOST" id="Q3THK7"/>
<dbReference type="PaxDb" id="10090-ENSMUSP00000029405"/>
<dbReference type="ProteomicsDB" id="270905"/>
<dbReference type="Pumba" id="Q3THK7"/>
<dbReference type="Antibodypedia" id="33632">
    <property type="antibodies" value="263 antibodies from 33 providers"/>
</dbReference>
<dbReference type="Ensembl" id="ENSMUST00000029405.8">
    <property type="protein sequence ID" value="ENSMUSP00000029405.8"/>
    <property type="gene ID" value="ENSMUSG00000027823.10"/>
</dbReference>
<dbReference type="GeneID" id="229363"/>
<dbReference type="KEGG" id="mmu:229363"/>
<dbReference type="UCSC" id="uc008pke.1">
    <property type="organism name" value="mouse"/>
</dbReference>
<dbReference type="AGR" id="MGI:2448526"/>
<dbReference type="CTD" id="8833"/>
<dbReference type="MGI" id="MGI:2448526">
    <property type="gene designation" value="Gmps"/>
</dbReference>
<dbReference type="VEuPathDB" id="HostDB:ENSMUSG00000027823"/>
<dbReference type="eggNOG" id="KOG1622">
    <property type="taxonomic scope" value="Eukaryota"/>
</dbReference>
<dbReference type="GeneTree" id="ENSGT00390000006591"/>
<dbReference type="HOGENOM" id="CLU_014340_0_2_1"/>
<dbReference type="InParanoid" id="Q3THK7"/>
<dbReference type="OMA" id="IWQSFAV"/>
<dbReference type="OrthoDB" id="1724632at2759"/>
<dbReference type="PhylomeDB" id="Q3THK7"/>
<dbReference type="TreeFam" id="TF106132"/>
<dbReference type="Reactome" id="R-MMU-73817">
    <property type="pathway name" value="Purine ribonucleoside monophosphate biosynthesis"/>
</dbReference>
<dbReference type="Reactome" id="R-MMU-9748787">
    <property type="pathway name" value="Azathioprine ADME"/>
</dbReference>
<dbReference type="UniPathway" id="UPA00189">
    <property type="reaction ID" value="UER00296"/>
</dbReference>
<dbReference type="BioGRID-ORCS" id="229363">
    <property type="hits" value="23 hits in 80 CRISPR screens"/>
</dbReference>
<dbReference type="ChiTaRS" id="Gmps">
    <property type="organism name" value="mouse"/>
</dbReference>
<dbReference type="PRO" id="PR:Q3THK7"/>
<dbReference type="Proteomes" id="UP000000589">
    <property type="component" value="Chromosome 3"/>
</dbReference>
<dbReference type="RNAct" id="Q3THK7">
    <property type="molecule type" value="protein"/>
</dbReference>
<dbReference type="Bgee" id="ENSMUSG00000027823">
    <property type="expression patterns" value="Expressed in ear vesicle and 238 other cell types or tissues"/>
</dbReference>
<dbReference type="ExpressionAtlas" id="Q3THK7">
    <property type="expression patterns" value="baseline and differential"/>
</dbReference>
<dbReference type="GO" id="GO:0005829">
    <property type="term" value="C:cytosol"/>
    <property type="evidence" value="ECO:0000250"/>
    <property type="project" value="UniProtKB"/>
</dbReference>
<dbReference type="GO" id="GO:0005524">
    <property type="term" value="F:ATP binding"/>
    <property type="evidence" value="ECO:0007669"/>
    <property type="project" value="UniProtKB-KW"/>
</dbReference>
<dbReference type="GO" id="GO:0003922">
    <property type="term" value="F:GMP synthase (glutamine-hydrolyzing) activity"/>
    <property type="evidence" value="ECO:0000314"/>
    <property type="project" value="MGI"/>
</dbReference>
<dbReference type="GO" id="GO:0003921">
    <property type="term" value="F:GMP synthase activity"/>
    <property type="evidence" value="ECO:0000266"/>
    <property type="project" value="MGI"/>
</dbReference>
<dbReference type="GO" id="GO:0006177">
    <property type="term" value="P:GMP biosynthetic process"/>
    <property type="evidence" value="ECO:0000314"/>
    <property type="project" value="MGI"/>
</dbReference>
<dbReference type="GO" id="GO:0032263">
    <property type="term" value="P:GMP salvage"/>
    <property type="evidence" value="ECO:0000266"/>
    <property type="project" value="MGI"/>
</dbReference>
<dbReference type="CDD" id="cd01742">
    <property type="entry name" value="GATase1_GMP_Synthase"/>
    <property type="match status" value="1"/>
</dbReference>
<dbReference type="CDD" id="cd01997">
    <property type="entry name" value="GMP_synthase_C"/>
    <property type="match status" value="1"/>
</dbReference>
<dbReference type="FunFam" id="3.30.300.10:FF:000008">
    <property type="entry name" value="GMP synthase [glutamine-hydrolyzing]"/>
    <property type="match status" value="1"/>
</dbReference>
<dbReference type="FunFam" id="3.30.300.10:FF:000009">
    <property type="entry name" value="GMP synthase [glutamine-hydrolyzing]"/>
    <property type="match status" value="1"/>
</dbReference>
<dbReference type="FunFam" id="3.40.50.620:FF:000044">
    <property type="entry name" value="GMP synthase [glutamine-hydrolyzing]"/>
    <property type="match status" value="1"/>
</dbReference>
<dbReference type="FunFam" id="3.40.50.880:FF:000013">
    <property type="entry name" value="GMP synthase [glutamine-hydrolyzing]"/>
    <property type="match status" value="1"/>
</dbReference>
<dbReference type="Gene3D" id="3.30.300.10">
    <property type="match status" value="2"/>
</dbReference>
<dbReference type="Gene3D" id="3.40.50.880">
    <property type="match status" value="1"/>
</dbReference>
<dbReference type="Gene3D" id="3.40.50.620">
    <property type="entry name" value="HUPs"/>
    <property type="match status" value="1"/>
</dbReference>
<dbReference type="InterPro" id="IPR029062">
    <property type="entry name" value="Class_I_gatase-like"/>
</dbReference>
<dbReference type="InterPro" id="IPR017926">
    <property type="entry name" value="GATASE"/>
</dbReference>
<dbReference type="InterPro" id="IPR001674">
    <property type="entry name" value="GMP_synth_C"/>
</dbReference>
<dbReference type="InterPro" id="IPR004739">
    <property type="entry name" value="GMP_synth_GATase"/>
</dbReference>
<dbReference type="InterPro" id="IPR025777">
    <property type="entry name" value="GMPS_ATP_PPase_dom"/>
</dbReference>
<dbReference type="InterPro" id="IPR022310">
    <property type="entry name" value="NAD/GMP_synthase"/>
</dbReference>
<dbReference type="InterPro" id="IPR014729">
    <property type="entry name" value="Rossmann-like_a/b/a_fold"/>
</dbReference>
<dbReference type="NCBIfam" id="TIGR00888">
    <property type="entry name" value="guaA_Nterm"/>
    <property type="match status" value="1"/>
</dbReference>
<dbReference type="PANTHER" id="PTHR11922:SF2">
    <property type="entry name" value="GMP SYNTHASE [GLUTAMINE-HYDROLYZING]"/>
    <property type="match status" value="1"/>
</dbReference>
<dbReference type="PANTHER" id="PTHR11922">
    <property type="entry name" value="GMP SYNTHASE-RELATED"/>
    <property type="match status" value="1"/>
</dbReference>
<dbReference type="Pfam" id="PF00117">
    <property type="entry name" value="GATase"/>
    <property type="match status" value="1"/>
</dbReference>
<dbReference type="Pfam" id="PF00958">
    <property type="entry name" value="GMP_synt_C"/>
    <property type="match status" value="1"/>
</dbReference>
<dbReference type="Pfam" id="PF02540">
    <property type="entry name" value="NAD_synthase"/>
    <property type="match status" value="1"/>
</dbReference>
<dbReference type="PRINTS" id="PR00097">
    <property type="entry name" value="ANTSNTHASEII"/>
</dbReference>
<dbReference type="PRINTS" id="PR00096">
    <property type="entry name" value="GATASE"/>
</dbReference>
<dbReference type="SUPFAM" id="SSF52402">
    <property type="entry name" value="Adenine nucleotide alpha hydrolases-like"/>
    <property type="match status" value="1"/>
</dbReference>
<dbReference type="SUPFAM" id="SSF52317">
    <property type="entry name" value="Class I glutamine amidotransferase-like"/>
    <property type="match status" value="1"/>
</dbReference>
<dbReference type="SUPFAM" id="SSF54810">
    <property type="entry name" value="GMP synthetase C-terminal dimerisation domain"/>
    <property type="match status" value="2"/>
</dbReference>
<dbReference type="PROSITE" id="PS51273">
    <property type="entry name" value="GATASE_TYPE_1"/>
    <property type="match status" value="1"/>
</dbReference>
<dbReference type="PROSITE" id="PS51553">
    <property type="entry name" value="GMPS_ATP_PPASE"/>
    <property type="match status" value="1"/>
</dbReference>
<keyword id="KW-0007">Acetylation</keyword>
<keyword id="KW-0067">ATP-binding</keyword>
<keyword id="KW-0963">Cytoplasm</keyword>
<keyword id="KW-0903">Direct protein sequencing</keyword>
<keyword id="KW-0315">Glutamine amidotransferase</keyword>
<keyword id="KW-0332">GMP biosynthesis</keyword>
<keyword id="KW-0436">Ligase</keyword>
<keyword id="KW-0547">Nucleotide-binding</keyword>
<keyword id="KW-0597">Phosphoprotein</keyword>
<keyword id="KW-0658">Purine biosynthesis</keyword>
<keyword id="KW-1185">Reference proteome</keyword>
<comment type="function">
    <text evidence="5">Catalyzes the conversion of xanthine monophosphate (XMP) to GMP in the presence of glutamine and ATP through an adenyl-XMP intermediate.</text>
</comment>
<comment type="catalytic activity">
    <reaction evidence="5">
        <text>XMP + L-glutamine + ATP + H2O = GMP + L-glutamate + AMP + diphosphate + 2 H(+)</text>
        <dbReference type="Rhea" id="RHEA:11680"/>
        <dbReference type="ChEBI" id="CHEBI:15377"/>
        <dbReference type="ChEBI" id="CHEBI:15378"/>
        <dbReference type="ChEBI" id="CHEBI:29985"/>
        <dbReference type="ChEBI" id="CHEBI:30616"/>
        <dbReference type="ChEBI" id="CHEBI:33019"/>
        <dbReference type="ChEBI" id="CHEBI:57464"/>
        <dbReference type="ChEBI" id="CHEBI:58115"/>
        <dbReference type="ChEBI" id="CHEBI:58359"/>
        <dbReference type="ChEBI" id="CHEBI:456215"/>
        <dbReference type="EC" id="6.3.5.2"/>
    </reaction>
    <physiologicalReaction direction="left-to-right" evidence="7">
        <dbReference type="Rhea" id="RHEA:11681"/>
    </physiologicalReaction>
</comment>
<comment type="cofactor">
    <cofactor evidence="2">
        <name>Mg(2+)</name>
        <dbReference type="ChEBI" id="CHEBI:18420"/>
    </cofactor>
</comment>
<comment type="activity regulation">
    <text evidence="5">Stimulated by dithiothreitol and inhibited by 2-mercaptoethanol, p-chloromercuribenzoate and hydroxylamine.</text>
</comment>
<comment type="biophysicochemical properties">
    <kinetics>
        <KM evidence="5">0.0036 mM for XMP</KM>
        <KM evidence="5">0.28 mM for ATP</KM>
        <KM evidence="5">0.68 mM for glutamine</KM>
        <Vmax evidence="5">1.0 nmol/min/mg enzyme for XMP</Vmax>
        <Vmax evidence="5">1.1 nmol/min/mg enzyme for ATP</Vmax>
        <Vmax evidence="5">1.37 nmol/min/mg enzyme for glutamine</Vmax>
    </kinetics>
    <phDependence>
        <text evidence="5">Optimum pH is 7.6.</text>
    </phDependence>
</comment>
<comment type="pathway">
    <text>Purine metabolism; GMP biosynthesis; GMP from XMP (L-Gln route): step 1/1.</text>
</comment>
<comment type="subunit">
    <text evidence="1">Homodimer.</text>
</comment>
<comment type="subcellular location">
    <subcellularLocation>
        <location evidence="1">Cytoplasm</location>
        <location evidence="1">Cytosol</location>
    </subcellularLocation>
</comment>
<comment type="sequence caution" evidence="6">
    <conflict type="frameshift">
        <sequence resource="EMBL-CDS" id="BAE20667"/>
    </conflict>
</comment>
<organism>
    <name type="scientific">Mus musculus</name>
    <name type="common">Mouse</name>
    <dbReference type="NCBI Taxonomy" id="10090"/>
    <lineage>
        <taxon>Eukaryota</taxon>
        <taxon>Metazoa</taxon>
        <taxon>Chordata</taxon>
        <taxon>Craniata</taxon>
        <taxon>Vertebrata</taxon>
        <taxon>Euteleostomi</taxon>
        <taxon>Mammalia</taxon>
        <taxon>Eutheria</taxon>
        <taxon>Euarchontoglires</taxon>
        <taxon>Glires</taxon>
        <taxon>Rodentia</taxon>
        <taxon>Myomorpha</taxon>
        <taxon>Muroidea</taxon>
        <taxon>Muridae</taxon>
        <taxon>Murinae</taxon>
        <taxon>Mus</taxon>
        <taxon>Mus</taxon>
    </lineage>
</organism>
<accession>Q3THK7</accession>
<accession>Q3TFR6</accession>
<accession>Q3TIH1</accession>
<accession>Q3UJ21</accession>
<accession>Q3V343</accession>
<accession>Q66JZ6</accession>
<evidence type="ECO:0000250" key="1">
    <source>
        <dbReference type="UniProtKB" id="P49915"/>
    </source>
</evidence>
<evidence type="ECO:0000250" key="2">
    <source>
        <dbReference type="UniProtKB" id="Q4V7C6"/>
    </source>
</evidence>
<evidence type="ECO:0000255" key="3">
    <source>
        <dbReference type="PROSITE-ProRule" id="PRU00605"/>
    </source>
</evidence>
<evidence type="ECO:0000255" key="4">
    <source>
        <dbReference type="PROSITE-ProRule" id="PRU00886"/>
    </source>
</evidence>
<evidence type="ECO:0000269" key="5">
    <source>
    </source>
</evidence>
<evidence type="ECO:0000305" key="6"/>
<evidence type="ECO:0000305" key="7">
    <source>
    </source>
</evidence>
<proteinExistence type="evidence at protein level"/>